<gene>
    <name evidence="1" type="primary">gltX1</name>
    <name type="ordered locus">RC0448</name>
</gene>
<organism>
    <name type="scientific">Rickettsia conorii (strain ATCC VR-613 / Malish 7)</name>
    <dbReference type="NCBI Taxonomy" id="272944"/>
    <lineage>
        <taxon>Bacteria</taxon>
        <taxon>Pseudomonadati</taxon>
        <taxon>Pseudomonadota</taxon>
        <taxon>Alphaproteobacteria</taxon>
        <taxon>Rickettsiales</taxon>
        <taxon>Rickettsiaceae</taxon>
        <taxon>Rickettsieae</taxon>
        <taxon>Rickettsia</taxon>
        <taxon>spotted fever group</taxon>
    </lineage>
</organism>
<reference key="1">
    <citation type="journal article" date="2001" name="Science">
        <title>Mechanisms of evolution in Rickettsia conorii and R. prowazekii.</title>
        <authorList>
            <person name="Ogata H."/>
            <person name="Audic S."/>
            <person name="Renesto-Audiffren P."/>
            <person name="Fournier P.-E."/>
            <person name="Barbe V."/>
            <person name="Samson D."/>
            <person name="Roux V."/>
            <person name="Cossart P."/>
            <person name="Weissenbach J."/>
            <person name="Claverie J.-M."/>
            <person name="Raoult D."/>
        </authorList>
    </citation>
    <scope>NUCLEOTIDE SEQUENCE [LARGE SCALE GENOMIC DNA]</scope>
    <source>
        <strain>ATCC VR-613 / Malish 7</strain>
    </source>
</reference>
<proteinExistence type="inferred from homology"/>
<evidence type="ECO:0000255" key="1">
    <source>
        <dbReference type="HAMAP-Rule" id="MF_00022"/>
    </source>
</evidence>
<protein>
    <recommendedName>
        <fullName evidence="1">Glutamate--tRNA ligase 1</fullName>
        <ecNumber evidence="1">6.1.1.17</ecNumber>
    </recommendedName>
    <alternativeName>
        <fullName evidence="1">Glutamyl-tRNA synthetase 1</fullName>
        <shortName evidence="1">GluRS 1</shortName>
    </alternativeName>
</protein>
<sequence length="447" mass="51782">MTKVITRFAPSPTGMLHVGNIRAALLNWLYAKKHNGQFILRFDDTDLERSKQEYKDAIEEDLKFLNIHWDQTFNQLSRLSRYDAIKNLLLDKKRLYACYETPEELELKRKFQLSKGLPPIYDRASLNLTEEQAKKYIEQRRKPHYRFLVNHEPISWHDMIKGEVKYDGKALSDPIVIRADGSMTYMLCSVIDDIDYDITHIIRGEDHVSNTAIQMQMFEALNTTPPTFGHLSLIINKDEKISKRVGGFEIATLRKEIGIEAMAIASFFSLLGSSAQILPYKSMEKLANQFEISSFSKSPTIYQPEDLERLNHKLLISLDFDTVKERLKEIDAEYIDENFWLSVSPNLQTLRDVKDWWEICHQTPNVETLNLDKEYLKQAAELLPKGEITKDSWSIWTKEITNITGRKGKELFLPLRLALTARESGPEIASVLPLIDREEIIKRLTSA</sequence>
<feature type="chain" id="PRO_0000119638" description="Glutamate--tRNA ligase 1">
    <location>
        <begin position="1"/>
        <end position="447"/>
    </location>
</feature>
<feature type="short sequence motif" description="'HIGH' region" evidence="1">
    <location>
        <begin position="10"/>
        <end position="20"/>
    </location>
</feature>
<feature type="short sequence motif" description="'KMSKS' region" evidence="1">
    <location>
        <begin position="240"/>
        <end position="244"/>
    </location>
</feature>
<feature type="binding site" evidence="1">
    <location>
        <position position="243"/>
    </location>
    <ligand>
        <name>ATP</name>
        <dbReference type="ChEBI" id="CHEBI:30616"/>
    </ligand>
</feature>
<dbReference type="EC" id="6.1.1.17" evidence="1"/>
<dbReference type="EMBL" id="AE006914">
    <property type="protein sequence ID" value="AAL02986.1"/>
    <property type="molecule type" value="Genomic_DNA"/>
</dbReference>
<dbReference type="PIR" id="H97755">
    <property type="entry name" value="H97755"/>
</dbReference>
<dbReference type="SMR" id="Q92IH2"/>
<dbReference type="GeneID" id="927586"/>
<dbReference type="KEGG" id="rco:RC0448"/>
<dbReference type="PATRIC" id="fig|272944.4.peg.510"/>
<dbReference type="HOGENOM" id="CLU_015768_6_1_5"/>
<dbReference type="Proteomes" id="UP000000816">
    <property type="component" value="Chromosome"/>
</dbReference>
<dbReference type="GO" id="GO:0005737">
    <property type="term" value="C:cytoplasm"/>
    <property type="evidence" value="ECO:0007669"/>
    <property type="project" value="UniProtKB-SubCell"/>
</dbReference>
<dbReference type="GO" id="GO:0005524">
    <property type="term" value="F:ATP binding"/>
    <property type="evidence" value="ECO:0007669"/>
    <property type="project" value="UniProtKB-UniRule"/>
</dbReference>
<dbReference type="GO" id="GO:0004818">
    <property type="term" value="F:glutamate-tRNA ligase activity"/>
    <property type="evidence" value="ECO:0007669"/>
    <property type="project" value="UniProtKB-UniRule"/>
</dbReference>
<dbReference type="GO" id="GO:0000049">
    <property type="term" value="F:tRNA binding"/>
    <property type="evidence" value="ECO:0007669"/>
    <property type="project" value="InterPro"/>
</dbReference>
<dbReference type="GO" id="GO:0008270">
    <property type="term" value="F:zinc ion binding"/>
    <property type="evidence" value="ECO:0007669"/>
    <property type="project" value="InterPro"/>
</dbReference>
<dbReference type="GO" id="GO:0006424">
    <property type="term" value="P:glutamyl-tRNA aminoacylation"/>
    <property type="evidence" value="ECO:0007669"/>
    <property type="project" value="UniProtKB-UniRule"/>
</dbReference>
<dbReference type="CDD" id="cd00808">
    <property type="entry name" value="GluRS_core"/>
    <property type="match status" value="1"/>
</dbReference>
<dbReference type="Gene3D" id="1.10.10.350">
    <property type="match status" value="1"/>
</dbReference>
<dbReference type="Gene3D" id="3.40.50.620">
    <property type="entry name" value="HUPs"/>
    <property type="match status" value="1"/>
</dbReference>
<dbReference type="HAMAP" id="MF_00022">
    <property type="entry name" value="Glu_tRNA_synth_type1"/>
    <property type="match status" value="1"/>
</dbReference>
<dbReference type="InterPro" id="IPR045462">
    <property type="entry name" value="aa-tRNA-synth_I_cd-bd"/>
</dbReference>
<dbReference type="InterPro" id="IPR020751">
    <property type="entry name" value="aa-tRNA-synth_I_codon-bd_sub2"/>
</dbReference>
<dbReference type="InterPro" id="IPR001412">
    <property type="entry name" value="aa-tRNA-synth_I_CS"/>
</dbReference>
<dbReference type="InterPro" id="IPR008925">
    <property type="entry name" value="aa_tRNA-synth_I_cd-bd_sf"/>
</dbReference>
<dbReference type="InterPro" id="IPR004527">
    <property type="entry name" value="Glu-tRNA-ligase_bac/mito"/>
</dbReference>
<dbReference type="InterPro" id="IPR000924">
    <property type="entry name" value="Glu/Gln-tRNA-synth"/>
</dbReference>
<dbReference type="InterPro" id="IPR020058">
    <property type="entry name" value="Glu/Gln-tRNA-synth_Ib_cat-dom"/>
</dbReference>
<dbReference type="InterPro" id="IPR049940">
    <property type="entry name" value="GluQ/Sye"/>
</dbReference>
<dbReference type="InterPro" id="IPR033910">
    <property type="entry name" value="GluRS_core"/>
</dbReference>
<dbReference type="InterPro" id="IPR014729">
    <property type="entry name" value="Rossmann-like_a/b/a_fold"/>
</dbReference>
<dbReference type="NCBIfam" id="TIGR00464">
    <property type="entry name" value="gltX_bact"/>
    <property type="match status" value="1"/>
</dbReference>
<dbReference type="PANTHER" id="PTHR43311">
    <property type="entry name" value="GLUTAMATE--TRNA LIGASE"/>
    <property type="match status" value="1"/>
</dbReference>
<dbReference type="PANTHER" id="PTHR43311:SF2">
    <property type="entry name" value="GLUTAMATE--TRNA LIGASE, MITOCHONDRIAL-RELATED"/>
    <property type="match status" value="1"/>
</dbReference>
<dbReference type="Pfam" id="PF19269">
    <property type="entry name" value="Anticodon_2"/>
    <property type="match status" value="1"/>
</dbReference>
<dbReference type="Pfam" id="PF00749">
    <property type="entry name" value="tRNA-synt_1c"/>
    <property type="match status" value="1"/>
</dbReference>
<dbReference type="PRINTS" id="PR00987">
    <property type="entry name" value="TRNASYNTHGLU"/>
</dbReference>
<dbReference type="SUPFAM" id="SSF48163">
    <property type="entry name" value="An anticodon-binding domain of class I aminoacyl-tRNA synthetases"/>
    <property type="match status" value="1"/>
</dbReference>
<dbReference type="SUPFAM" id="SSF52374">
    <property type="entry name" value="Nucleotidylyl transferase"/>
    <property type="match status" value="1"/>
</dbReference>
<dbReference type="PROSITE" id="PS00178">
    <property type="entry name" value="AA_TRNA_LIGASE_I"/>
    <property type="match status" value="1"/>
</dbReference>
<accession>Q92IH2</accession>
<keyword id="KW-0030">Aminoacyl-tRNA synthetase</keyword>
<keyword id="KW-0067">ATP-binding</keyword>
<keyword id="KW-0963">Cytoplasm</keyword>
<keyword id="KW-0436">Ligase</keyword>
<keyword id="KW-0547">Nucleotide-binding</keyword>
<keyword id="KW-0648">Protein biosynthesis</keyword>
<comment type="function">
    <text evidence="1">Catalyzes the attachment of glutamate to tRNA(Glu) in a two-step reaction: glutamate is first activated by ATP to form Glu-AMP and then transferred to the acceptor end of tRNA(Glu).</text>
</comment>
<comment type="catalytic activity">
    <reaction evidence="1">
        <text>tRNA(Glu) + L-glutamate + ATP = L-glutamyl-tRNA(Glu) + AMP + diphosphate</text>
        <dbReference type="Rhea" id="RHEA:23540"/>
        <dbReference type="Rhea" id="RHEA-COMP:9663"/>
        <dbReference type="Rhea" id="RHEA-COMP:9680"/>
        <dbReference type="ChEBI" id="CHEBI:29985"/>
        <dbReference type="ChEBI" id="CHEBI:30616"/>
        <dbReference type="ChEBI" id="CHEBI:33019"/>
        <dbReference type="ChEBI" id="CHEBI:78442"/>
        <dbReference type="ChEBI" id="CHEBI:78520"/>
        <dbReference type="ChEBI" id="CHEBI:456215"/>
        <dbReference type="EC" id="6.1.1.17"/>
    </reaction>
</comment>
<comment type="subunit">
    <text evidence="1">Monomer.</text>
</comment>
<comment type="subcellular location">
    <subcellularLocation>
        <location evidence="1">Cytoplasm</location>
    </subcellularLocation>
</comment>
<comment type="similarity">
    <text evidence="1">Belongs to the class-I aminoacyl-tRNA synthetase family. Glutamate--tRNA ligase type 1 subfamily.</text>
</comment>
<name>SYE1_RICCN</name>